<comment type="function">
    <text evidence="8">Serine endoprotease which cleaves substrates at the RX(K/R)R consensus motif.</text>
</comment>
<comment type="catalytic activity">
    <reaction evidence="8">
        <text>Release of mature proteins from their proproteins by cleavage of -Arg-Xaa-Yaa-Arg-|-Zaa- bonds, where Xaa can be any amino acid and Yaa is Arg or Lys. Releases albumin, complement component C3 and von Willebrand factor from their respective precursors.</text>
        <dbReference type="EC" id="3.4.21.75"/>
    </reaction>
</comment>
<comment type="cofactor">
    <cofactor evidence="8">
        <name>Ca(2+)</name>
        <dbReference type="ChEBI" id="CHEBI:29108"/>
    </cofactor>
    <text evidence="1">Binds 3 calcium ions per subunit.</text>
</comment>
<comment type="activity regulation">
    <text evidence="8">Inhibited by the propeptide before the second cleavage. Inhibited by ethylenediaminetetraacetic acid (EDTA), ZnSO(4) and chloroketone DEC-RVKR-CMK.</text>
</comment>
<comment type="biophysicochemical properties">
    <phDependence>
        <text evidence="8">Optimum pH is 7.0. Active from pH 7.0 to 8.5.</text>
    </phDependence>
</comment>
<comment type="subcellular location">
    <subcellularLocation>
        <location evidence="11">Secreted</location>
    </subcellularLocation>
</comment>
<comment type="PTM">
    <text evidence="8">N-glycosylated.</text>
</comment>
<comment type="PTM">
    <text evidence="8">The inhibition peptide, which plays the role of an intramolecular chaperone, is probably autocatalytically removed in the endoplasmic reticulum (ER) and remains non-covalently bound as a potent autoinhibitor. Probably following transport to the trans Golgi, a second cleavage within the inhibition propeptide results in propeptide dissociation and bli activation.</text>
</comment>
<comment type="similarity">
    <text evidence="10">Belongs to the peptidase S8 family. Furin subfamily.</text>
</comment>
<accession>A0A044RE18</accession>
<accession>Q7Z0F0</accession>
<evidence type="ECO:0000250" key="1">
    <source>
        <dbReference type="UniProtKB" id="P09958"/>
    </source>
</evidence>
<evidence type="ECO:0000250" key="2">
    <source>
        <dbReference type="UniProtKB" id="P23188"/>
    </source>
</evidence>
<evidence type="ECO:0000255" key="3"/>
<evidence type="ECO:0000255" key="4">
    <source>
        <dbReference type="PROSITE-ProRule" id="PRU00498"/>
    </source>
</evidence>
<evidence type="ECO:0000255" key="5">
    <source>
        <dbReference type="PROSITE-ProRule" id="PRU01173"/>
    </source>
</evidence>
<evidence type="ECO:0000255" key="6">
    <source>
        <dbReference type="PROSITE-ProRule" id="PRU01240"/>
    </source>
</evidence>
<evidence type="ECO:0000256" key="7">
    <source>
        <dbReference type="SAM" id="MobiDB-lite"/>
    </source>
</evidence>
<evidence type="ECO:0000269" key="8">
    <source>
    </source>
</evidence>
<evidence type="ECO:0000303" key="9">
    <source>
    </source>
</evidence>
<evidence type="ECO:0000305" key="10"/>
<evidence type="ECO:0000305" key="11">
    <source>
    </source>
</evidence>
<evidence type="ECO:0000312" key="12">
    <source>
        <dbReference type="EMBL" id="AAO12507.1"/>
    </source>
</evidence>
<evidence type="ECO:0000312" key="13">
    <source>
        <dbReference type="Proteomes" id="UP000024404"/>
    </source>
</evidence>
<sequence>MYWQLVRILVLFDCLQKILAIEHDSICIADVDDACPEPSHTVMRLRERNDKKAHLIAKQHGLEIRGQPFLDGKSYFVTHISKQRSRRRKREIISRLQEHPDILSIEEQRPRVRRKRDFLYPDIAHELAGSSTNIRHTGLISNTEPRIDFIQHDAPVLPFPDPLYKEQWYLNNGAQGGFDMNVQAAWLLGYAGRNISVSILDDGIQRDHPDLAANYDPLASTDINGHDDDPTPQDDGDNKHGTRCAGEVASIAGNVYCGVGVAFHAKIGGVRMLDGPVSDSVEAASLSLNRHHIDIYSASWGPEDDGRTFDGPGPLAREAFYRGVKAGRGGKGSIFVWASGNGGSRQDSCSADGYTTSVYTLSVSSATIDNRSPWYLEECPSTIATTYSSANMNQPAIITVDVPHGCTRSHTGTSASAPLAAGIIALALEANPNLTWRDMQHIVLRTANPVPLLNNPGWSVNGVGRRINNKFGYGLMDAGALVKLALIWKTVPEQHICTYDYKLEKPNPRPITGNFQMNFSLEVNGCESGTPVLYLEHVQVLATFRFGKRGDLKLTLFSPRGTSSVLLPPRPQDFNSNGIHKWPFLSVQTWGEDPRGKWTLMVESVSTNRNVGGTFHDWSLLLYGTAEPAQPNDPRHSSVVPSSVSAESPFDRITQHIASQEKKKKQRDSRDWQPKKVENKKSLLVSAQPELRV</sequence>
<dbReference type="EC" id="3.4.21.75" evidence="8"/>
<dbReference type="EMBL" id="AY157026">
    <property type="protein sequence ID" value="AAO12507.1"/>
    <property type="molecule type" value="mRNA"/>
</dbReference>
<dbReference type="EMBL" id="CBVM010000012">
    <property type="status" value="NOT_ANNOTATED_CDS"/>
    <property type="molecule type" value="Genomic_DNA"/>
</dbReference>
<dbReference type="SMR" id="A0A044RE18"/>
<dbReference type="STRING" id="6282.A0A044RE18"/>
<dbReference type="MEROPS" id="S08.031"/>
<dbReference type="GlyCosmos" id="A0A044RE18">
    <property type="glycosylation" value="3 sites, No reported glycans"/>
</dbReference>
<dbReference type="EnsemblMetazoa" id="OVOC11771.1">
    <property type="protein sequence ID" value="OVOC11771.1"/>
    <property type="gene ID" value="WBGene00248580"/>
</dbReference>
<dbReference type="OMA" id="GTFHDWS"/>
<dbReference type="Proteomes" id="UP000024404">
    <property type="component" value="Unassembled WGS sequence"/>
</dbReference>
<dbReference type="GO" id="GO:0005576">
    <property type="term" value="C:extracellular region"/>
    <property type="evidence" value="ECO:0007669"/>
    <property type="project" value="UniProtKB-SubCell"/>
</dbReference>
<dbReference type="GO" id="GO:0000139">
    <property type="term" value="C:Golgi membrane"/>
    <property type="evidence" value="ECO:0007669"/>
    <property type="project" value="TreeGrafter"/>
</dbReference>
<dbReference type="GO" id="GO:0005634">
    <property type="term" value="C:nucleus"/>
    <property type="evidence" value="ECO:0007669"/>
    <property type="project" value="EnsemblMetazoa"/>
</dbReference>
<dbReference type="GO" id="GO:0005802">
    <property type="term" value="C:trans-Golgi network"/>
    <property type="evidence" value="ECO:0007669"/>
    <property type="project" value="TreeGrafter"/>
</dbReference>
<dbReference type="GO" id="GO:0046872">
    <property type="term" value="F:metal ion binding"/>
    <property type="evidence" value="ECO:0007669"/>
    <property type="project" value="UniProtKB-KW"/>
</dbReference>
<dbReference type="GO" id="GO:0004252">
    <property type="term" value="F:serine-type endopeptidase activity"/>
    <property type="evidence" value="ECO:0000314"/>
    <property type="project" value="UniProtKB"/>
</dbReference>
<dbReference type="GO" id="GO:1902075">
    <property type="term" value="P:cellular response to salt"/>
    <property type="evidence" value="ECO:0007669"/>
    <property type="project" value="EnsemblMetazoa"/>
</dbReference>
<dbReference type="GO" id="GO:0007635">
    <property type="term" value="P:chemosensory behavior"/>
    <property type="evidence" value="ECO:0007669"/>
    <property type="project" value="EnsemblMetazoa"/>
</dbReference>
<dbReference type="GO" id="GO:0040002">
    <property type="term" value="P:collagen and cuticulin-based cuticle development"/>
    <property type="evidence" value="ECO:0007669"/>
    <property type="project" value="EnsemblMetazoa"/>
</dbReference>
<dbReference type="GO" id="GO:0090472">
    <property type="term" value="P:dibasic protein processing"/>
    <property type="evidence" value="ECO:0000314"/>
    <property type="project" value="UniProtKB"/>
</dbReference>
<dbReference type="GO" id="GO:0045887">
    <property type="term" value="P:positive regulation of synaptic assembly at neuromuscular junction"/>
    <property type="evidence" value="ECO:0007669"/>
    <property type="project" value="EnsemblMetazoa"/>
</dbReference>
<dbReference type="GO" id="GO:0031638">
    <property type="term" value="P:zymogen activation"/>
    <property type="evidence" value="ECO:0000314"/>
    <property type="project" value="UniProtKB"/>
</dbReference>
<dbReference type="CDD" id="cd04059">
    <property type="entry name" value="Peptidases_S8_Protein_convertases_Kexins_Furin-like"/>
    <property type="match status" value="1"/>
</dbReference>
<dbReference type="FunFam" id="3.40.50.200:FF:000001">
    <property type="entry name" value="Furin 2, isoform B"/>
    <property type="match status" value="1"/>
</dbReference>
<dbReference type="FunFam" id="2.60.120.260:FF:000006">
    <property type="entry name" value="Proprotein convertase subtilisin/kexin type 5"/>
    <property type="match status" value="1"/>
</dbReference>
<dbReference type="Gene3D" id="2.60.120.260">
    <property type="entry name" value="Galactose-binding domain-like"/>
    <property type="match status" value="1"/>
</dbReference>
<dbReference type="Gene3D" id="3.30.70.850">
    <property type="entry name" value="Peptidase S8, pro-domain"/>
    <property type="match status" value="1"/>
</dbReference>
<dbReference type="Gene3D" id="3.40.50.200">
    <property type="entry name" value="Peptidase S8/S53 domain"/>
    <property type="match status" value="1"/>
</dbReference>
<dbReference type="InterPro" id="IPR008979">
    <property type="entry name" value="Galactose-bd-like_sf"/>
</dbReference>
<dbReference type="InterPro" id="IPR034182">
    <property type="entry name" value="Kexin/furin"/>
</dbReference>
<dbReference type="InterPro" id="IPR002884">
    <property type="entry name" value="P_dom"/>
</dbReference>
<dbReference type="InterPro" id="IPR000209">
    <property type="entry name" value="Peptidase_S8/S53_dom"/>
</dbReference>
<dbReference type="InterPro" id="IPR036852">
    <property type="entry name" value="Peptidase_S8/S53_dom_sf"/>
</dbReference>
<dbReference type="InterPro" id="IPR023827">
    <property type="entry name" value="Peptidase_S8_Asp-AS"/>
</dbReference>
<dbReference type="InterPro" id="IPR022398">
    <property type="entry name" value="Peptidase_S8_His-AS"/>
</dbReference>
<dbReference type="InterPro" id="IPR023828">
    <property type="entry name" value="Peptidase_S8_Ser-AS"/>
</dbReference>
<dbReference type="InterPro" id="IPR015500">
    <property type="entry name" value="Peptidase_S8_subtilisin-rel"/>
</dbReference>
<dbReference type="InterPro" id="IPR032815">
    <property type="entry name" value="S8_pro-domain"/>
</dbReference>
<dbReference type="InterPro" id="IPR038466">
    <property type="entry name" value="S8_pro-domain_sf"/>
</dbReference>
<dbReference type="PANTHER" id="PTHR42884:SF23">
    <property type="entry name" value="FURIN-LIKE PROTEASE 2"/>
    <property type="match status" value="1"/>
</dbReference>
<dbReference type="PANTHER" id="PTHR42884">
    <property type="entry name" value="PROPROTEIN CONVERTASE SUBTILISIN/KEXIN-RELATED"/>
    <property type="match status" value="1"/>
</dbReference>
<dbReference type="Pfam" id="PF01483">
    <property type="entry name" value="P_proprotein"/>
    <property type="match status" value="1"/>
</dbReference>
<dbReference type="Pfam" id="PF00082">
    <property type="entry name" value="Peptidase_S8"/>
    <property type="match status" value="1"/>
</dbReference>
<dbReference type="Pfam" id="PF16470">
    <property type="entry name" value="S8_pro-domain"/>
    <property type="match status" value="1"/>
</dbReference>
<dbReference type="PRINTS" id="PR00723">
    <property type="entry name" value="SUBTILISIN"/>
</dbReference>
<dbReference type="SUPFAM" id="SSF49785">
    <property type="entry name" value="Galactose-binding domain-like"/>
    <property type="match status" value="1"/>
</dbReference>
<dbReference type="SUPFAM" id="SSF54897">
    <property type="entry name" value="Protease propeptides/inhibitors"/>
    <property type="match status" value="1"/>
</dbReference>
<dbReference type="SUPFAM" id="SSF52743">
    <property type="entry name" value="Subtilisin-like"/>
    <property type="match status" value="1"/>
</dbReference>
<dbReference type="PROSITE" id="PS51829">
    <property type="entry name" value="P_HOMO_B"/>
    <property type="match status" value="1"/>
</dbReference>
<dbReference type="PROSITE" id="PS51892">
    <property type="entry name" value="SUBTILASE"/>
    <property type="match status" value="1"/>
</dbReference>
<dbReference type="PROSITE" id="PS00136">
    <property type="entry name" value="SUBTILASE_ASP"/>
    <property type="match status" value="1"/>
</dbReference>
<dbReference type="PROSITE" id="PS00137">
    <property type="entry name" value="SUBTILASE_HIS"/>
    <property type="match status" value="1"/>
</dbReference>
<dbReference type="PROSITE" id="PS00138">
    <property type="entry name" value="SUBTILASE_SER"/>
    <property type="match status" value="1"/>
</dbReference>
<keyword id="KW-0068">Autocatalytic cleavage</keyword>
<keyword id="KW-0106">Calcium</keyword>
<keyword id="KW-0165">Cleavage on pair of basic residues</keyword>
<keyword id="KW-1015">Disulfide bond</keyword>
<keyword id="KW-0325">Glycoprotein</keyword>
<keyword id="KW-0378">Hydrolase</keyword>
<keyword id="KW-0479">Metal-binding</keyword>
<keyword id="KW-0645">Protease</keyword>
<keyword id="KW-1185">Reference proteome</keyword>
<keyword id="KW-0964">Secreted</keyword>
<keyword id="KW-0720">Serine protease</keyword>
<keyword id="KW-0732">Signal</keyword>
<keyword id="KW-0865">Zymogen</keyword>
<feature type="signal peptide" evidence="3">
    <location>
        <begin position="1"/>
        <end position="20"/>
    </location>
</feature>
<feature type="propeptide" id="PRO_0000439880" description="Inhibition peptide" evidence="11">
    <location>
        <begin position="21"/>
        <end position="116"/>
    </location>
</feature>
<feature type="chain" id="PRO_5004295169" description="Endoprotease bli" evidence="11">
    <location>
        <begin position="117"/>
        <end position="693"/>
    </location>
</feature>
<feature type="domain" description="Peptidase S8" evidence="6">
    <location>
        <begin position="167"/>
        <end position="482"/>
    </location>
</feature>
<feature type="domain" description="P/Homo B" evidence="5">
    <location>
        <begin position="490"/>
        <end position="628"/>
    </location>
</feature>
<feature type="region of interest" description="Disordered" evidence="7">
    <location>
        <begin position="215"/>
        <end position="242"/>
    </location>
</feature>
<feature type="region of interest" description="Disordered" evidence="7">
    <location>
        <begin position="629"/>
        <end position="693"/>
    </location>
</feature>
<feature type="compositionally biased region" description="Basic and acidic residues" evidence="7">
    <location>
        <begin position="668"/>
        <end position="681"/>
    </location>
</feature>
<feature type="active site" description="Charge relay system" evidence="6">
    <location>
        <position position="201"/>
    </location>
</feature>
<feature type="active site" description="Charge relay system" evidence="6">
    <location>
        <position position="240"/>
    </location>
</feature>
<feature type="active site" description="Charge relay system" evidence="6">
    <location>
        <position position="414"/>
    </location>
</feature>
<feature type="binding site" evidence="1">
    <location>
        <position position="161"/>
    </location>
    <ligand>
        <name>Ca(2+)</name>
        <dbReference type="ChEBI" id="CHEBI:29108"/>
        <label>1</label>
    </ligand>
</feature>
<feature type="binding site" evidence="1">
    <location>
        <position position="202"/>
    </location>
    <ligand>
        <name>substrate</name>
    </ligand>
</feature>
<feature type="binding site" evidence="1">
    <location>
        <position position="210"/>
    </location>
    <ligand>
        <name>Ca(2+)</name>
        <dbReference type="ChEBI" id="CHEBI:29108"/>
        <label>1</label>
    </ligand>
</feature>
<feature type="binding site" evidence="1">
    <location>
        <position position="222"/>
    </location>
    <ligand>
        <name>Ca(2+)</name>
        <dbReference type="ChEBI" id="CHEBI:29108"/>
        <label>2</label>
    </ligand>
</feature>
<feature type="binding site" evidence="1">
    <location>
        <position position="227"/>
    </location>
    <ligand>
        <name>Ca(2+)</name>
        <dbReference type="ChEBI" id="CHEBI:29108"/>
        <label>2</label>
    </ligand>
</feature>
<feature type="binding site" evidence="1">
    <location>
        <position position="229"/>
    </location>
    <ligand>
        <name>Ca(2+)</name>
        <dbReference type="ChEBI" id="CHEBI:29108"/>
        <label>2</label>
    </ligand>
</feature>
<feature type="binding site" evidence="1">
    <location>
        <begin position="237"/>
        <end position="238"/>
    </location>
    <ligand>
        <name>substrate</name>
    </ligand>
</feature>
<feature type="binding site" evidence="1">
    <location>
        <position position="251"/>
    </location>
    <ligand>
        <name>Ca(2+)</name>
        <dbReference type="ChEBI" id="CHEBI:29108"/>
        <label>1</label>
    </ligand>
</feature>
<feature type="binding site" evidence="1">
    <location>
        <position position="254"/>
    </location>
    <ligand>
        <name>Ca(2+)</name>
        <dbReference type="ChEBI" id="CHEBI:29108"/>
        <label>1</label>
    </ligand>
</feature>
<feature type="binding site" evidence="1">
    <location>
        <position position="256"/>
    </location>
    <ligand>
        <name>Ca(2+)</name>
        <dbReference type="ChEBI" id="CHEBI:29108"/>
        <label>1</label>
    </ligand>
</feature>
<feature type="binding site" evidence="1">
    <location>
        <position position="258"/>
    </location>
    <ligand>
        <name>Ca(2+)</name>
        <dbReference type="ChEBI" id="CHEBI:29108"/>
        <label>1</label>
    </ligand>
</feature>
<feature type="binding site" evidence="1">
    <location>
        <position position="282"/>
    </location>
    <ligand>
        <name>substrate</name>
    </ligand>
</feature>
<feature type="binding site" evidence="1">
    <location>
        <begin position="299"/>
        <end position="304"/>
    </location>
    <ligand>
        <name>substrate</name>
    </ligand>
</feature>
<feature type="binding site" evidence="1">
    <location>
        <position position="304"/>
    </location>
    <ligand>
        <name>Ca(2+)</name>
        <dbReference type="ChEBI" id="CHEBI:29108"/>
        <label>3</label>
    </ligand>
</feature>
<feature type="binding site" evidence="1">
    <location>
        <position position="310"/>
    </location>
    <ligand>
        <name>substrate</name>
    </ligand>
</feature>
<feature type="binding site" evidence="1">
    <location>
        <begin position="338"/>
        <end position="341"/>
    </location>
    <ligand>
        <name>substrate</name>
    </ligand>
</feature>
<feature type="binding site" evidence="1">
    <location>
        <position position="347"/>
    </location>
    <ligand>
        <name>Ca(2+)</name>
        <dbReference type="ChEBI" id="CHEBI:29108"/>
        <label>3</label>
    </ligand>
</feature>
<feature type="binding site" evidence="1">
    <location>
        <position position="352"/>
    </location>
    <ligand>
        <name>substrate</name>
    </ligand>
</feature>
<feature type="binding site" evidence="1">
    <location>
        <position position="354"/>
    </location>
    <ligand>
        <name>substrate</name>
    </ligand>
</feature>
<feature type="binding site" evidence="1">
    <location>
        <position position="377"/>
    </location>
    <ligand>
        <name>Ca(2+)</name>
        <dbReference type="ChEBI" id="CHEBI:29108"/>
        <label>3</label>
    </ligand>
</feature>
<feature type="binding site" evidence="1">
    <location>
        <position position="414"/>
    </location>
    <ligand>
        <name>substrate</name>
    </ligand>
</feature>
<feature type="site" description="Cleavage, second; by autolysis" evidence="1">
    <location>
        <begin position="84"/>
        <end position="85"/>
    </location>
</feature>
<feature type="site" description="Cleavage, first; by autolysis" evidence="11">
    <location>
        <begin position="116"/>
        <end position="117"/>
    </location>
</feature>
<feature type="glycosylation site" description="N-linked (GlcNAc...) asparagine" evidence="4">
    <location>
        <position position="194"/>
    </location>
</feature>
<feature type="glycosylation site" description="N-linked (GlcNAc...) asparagine" evidence="4">
    <location>
        <position position="433"/>
    </location>
</feature>
<feature type="glycosylation site" description="N-linked (GlcNAc...) asparagine" evidence="4">
    <location>
        <position position="518"/>
    </location>
</feature>
<feature type="disulfide bond" evidence="2">
    <location>
        <begin position="257"/>
        <end position="406"/>
    </location>
</feature>
<feature type="disulfide bond" evidence="2">
    <location>
        <begin position="349"/>
        <end position="379"/>
    </location>
</feature>
<feature type="disulfide bond" evidence="2">
    <location>
        <begin position="497"/>
        <end position="526"/>
    </location>
</feature>
<feature type="sequence conflict" description="In Ref. 1; AAO12507." evidence="10" ref="1">
    <original>EKKKKQRDSRDWQPKKVENKKSLLVSAQPELRV</original>
    <variation>VHGPQSFFFSFLCLYNS</variation>
    <location>
        <begin position="661"/>
        <end position="693"/>
    </location>
</feature>
<proteinExistence type="evidence at protein level"/>
<organism evidence="13">
    <name type="scientific">Onchocerca volvulus</name>
    <dbReference type="NCBI Taxonomy" id="6282"/>
    <lineage>
        <taxon>Eukaryota</taxon>
        <taxon>Metazoa</taxon>
        <taxon>Ecdysozoa</taxon>
        <taxon>Nematoda</taxon>
        <taxon>Chromadorea</taxon>
        <taxon>Rhabditida</taxon>
        <taxon>Spirurina</taxon>
        <taxon>Spiruromorpha</taxon>
        <taxon>Filarioidea</taxon>
        <taxon>Onchocercidae</taxon>
        <taxon>Onchocerca</taxon>
    </lineage>
</organism>
<gene>
    <name evidence="9" type="primary">Bli</name>
</gene>
<protein>
    <recommendedName>
        <fullName evidence="10">Endoprotease bli</fullName>
        <ecNumber evidence="8">3.4.21.75</ecNumber>
    </recommendedName>
    <alternativeName>
        <fullName evidence="9">Blisterase</fullName>
    </alternativeName>
</protein>
<name>BLI_ONCVO</name>
<reference evidence="12" key="1">
    <citation type="journal article" date="2003" name="J. Biol. Chem.">
        <title>Cloning and biochemical characterization of blisterase, a subtilisin-like convertase from the filarial parasite, Onchocerca volvulus.</title>
        <authorList>
            <person name="Poole C.B."/>
            <person name="Jin J."/>
            <person name="McReynolds L.A."/>
        </authorList>
    </citation>
    <scope>NUCLEOTIDE SEQUENCE [MRNA]</scope>
    <scope>FUNCTION</scope>
    <scope>CATALYTIC ACTIVITY</scope>
    <scope>COFACTOR</scope>
    <scope>ACTIVITY REGULATION</scope>
    <scope>BIOPHYSICOCHEMICAL PROPERTIES</scope>
    <scope>GLYCOSYLATION</scope>
    <scope>PROTEOLYTIC CLEAVAGE</scope>
</reference>
<reference evidence="13" key="2">
    <citation type="submission" date="2013-10" db="EMBL/GenBank/DDBJ databases">
        <title>Genome sequencing of Onchocerca volvulus.</title>
        <authorList>
            <person name="Cotton J."/>
            <person name="Tsai J."/>
            <person name="Stanley E."/>
            <person name="Tracey A."/>
            <person name="Holroyd N."/>
            <person name="Lustigman S."/>
            <person name="Berriman M."/>
        </authorList>
    </citation>
    <scope>NUCLEOTIDE SEQUENCE [LARGE SCALE GENOMIC DNA]</scope>
</reference>